<gene>
    <name evidence="5" type="primary">Hexa</name>
</gene>
<keyword id="KW-1015">Disulfide bond</keyword>
<keyword id="KW-0325">Glycoprotein</keyword>
<keyword id="KW-0326">Glycosidase</keyword>
<keyword id="KW-0378">Hydrolase</keyword>
<keyword id="KW-0443">Lipid metabolism</keyword>
<keyword id="KW-0458">Lysosome</keyword>
<keyword id="KW-1185">Reference proteome</keyword>
<keyword id="KW-0732">Signal</keyword>
<keyword id="KW-0865">Zymogen</keyword>
<sequence length="528" mass="60538">MAGCRLWVSLLLAAALACLATALWPWPQYIQTSHRRYTLYPNNFQFRYHAGSAAQAGCVVLDEAFRRYRSLLFGSGSWPRPSFSKKQQPLGKNILMVSVVTAECNEFPNLESVENYTLTINDDQCLLSSETVWGALRGLETFSQLVWKSAEGTFFINKTKITDFPRFPHRGILLDTSRHYLPLSSILNTLDVMAYNKFNVFHWHLVDDSSFPYESFTFPELTRKGSFNPVTHIYTAQDVKEVIEYARLRGIRVLAEFDTPGHTLSWGAGVPGLLTPCYSGSRLSGTYGPVNPSLNSTYDFMSTFFLEISSVFPDFYLHLGGDEVDFTCWKSNPNIQAFMKKKGFTDYKQLESFYIQTLLDIVSDYDKGYVVWQEVFDNKVKVRPDTIIQVWREEMPVQYMKEIEAITQAGFRALLSAPWYLNRVKYGPDWKEMYKVEPLAFRGTPAQKALVIGGEACMWGEYVDSTNLVPRLWPRAGAIAERLWSSNLTTNMDFAFKRLSHFRCELLRRGIQAQPISVGYCEQEFEHT</sequence>
<dbReference type="EC" id="3.2.1.52" evidence="2"/>
<dbReference type="EMBL" id="BC082097">
    <property type="protein sequence ID" value="AAH82097.1"/>
    <property type="molecule type" value="mRNA"/>
</dbReference>
<dbReference type="RefSeq" id="NP_001004443.1">
    <property type="nucleotide sequence ID" value="NM_001004443.1"/>
</dbReference>
<dbReference type="SMR" id="Q641X3"/>
<dbReference type="FunCoup" id="Q641X3">
    <property type="interactions" value="1441"/>
</dbReference>
<dbReference type="IntAct" id="Q641X3">
    <property type="interactions" value="1"/>
</dbReference>
<dbReference type="STRING" id="10116.ENSRNOP00000013747"/>
<dbReference type="CAZy" id="GH20">
    <property type="family name" value="Glycoside Hydrolase Family 20"/>
</dbReference>
<dbReference type="GlyCosmos" id="Q641X3">
    <property type="glycosylation" value="4 sites, No reported glycans"/>
</dbReference>
<dbReference type="GlyGen" id="Q641X3">
    <property type="glycosylation" value="4 sites"/>
</dbReference>
<dbReference type="PhosphoSitePlus" id="Q641X3"/>
<dbReference type="jPOST" id="Q641X3"/>
<dbReference type="PaxDb" id="10116-ENSRNOP00000013747"/>
<dbReference type="Ensembl" id="ENSRNOT00000108506.1">
    <property type="protein sequence ID" value="ENSRNOP00000084550.1"/>
    <property type="gene ID" value="ENSRNOG00000010252.5"/>
</dbReference>
<dbReference type="GeneID" id="300757"/>
<dbReference type="KEGG" id="rno:300757"/>
<dbReference type="UCSC" id="RGD:2792">
    <property type="organism name" value="rat"/>
</dbReference>
<dbReference type="AGR" id="RGD:2792"/>
<dbReference type="CTD" id="3073"/>
<dbReference type="RGD" id="2792">
    <property type="gene designation" value="Hexa"/>
</dbReference>
<dbReference type="eggNOG" id="KOG2499">
    <property type="taxonomic scope" value="Eukaryota"/>
</dbReference>
<dbReference type="GeneTree" id="ENSGT00390000008107"/>
<dbReference type="HOGENOM" id="CLU_007082_0_0_1"/>
<dbReference type="InParanoid" id="Q641X3"/>
<dbReference type="OMA" id="KMWPRAA"/>
<dbReference type="OrthoDB" id="428480at2759"/>
<dbReference type="PhylomeDB" id="Q641X3"/>
<dbReference type="TreeFam" id="TF313036"/>
<dbReference type="Reactome" id="R-RNO-2022857">
    <property type="pathway name" value="Keratan sulfate degradation"/>
</dbReference>
<dbReference type="Reactome" id="R-RNO-2024101">
    <property type="pathway name" value="CS/DS degradation"/>
</dbReference>
<dbReference type="Reactome" id="R-RNO-2160916">
    <property type="pathway name" value="Hyaluronan uptake and degradation"/>
</dbReference>
<dbReference type="Reactome" id="R-RNO-9840310">
    <property type="pathway name" value="Glycosphingolipid catabolism"/>
</dbReference>
<dbReference type="SABIO-RK" id="Q641X3"/>
<dbReference type="PRO" id="PR:Q641X3"/>
<dbReference type="Proteomes" id="UP000002494">
    <property type="component" value="Chromosome 8"/>
</dbReference>
<dbReference type="Bgee" id="ENSRNOG00000010252">
    <property type="expression patterns" value="Expressed in adult mammalian kidney and 19 other cell types or tissues"/>
</dbReference>
<dbReference type="GO" id="GO:0042582">
    <property type="term" value="C:azurophil granule"/>
    <property type="evidence" value="ECO:0000266"/>
    <property type="project" value="RGD"/>
</dbReference>
<dbReference type="GO" id="GO:1905379">
    <property type="term" value="C:beta-N-acetylhexosaminidase complex"/>
    <property type="evidence" value="ECO:0000266"/>
    <property type="project" value="RGD"/>
</dbReference>
<dbReference type="GO" id="GO:0005764">
    <property type="term" value="C:lysosome"/>
    <property type="evidence" value="ECO:0000266"/>
    <property type="project" value="RGD"/>
</dbReference>
<dbReference type="GO" id="GO:0016020">
    <property type="term" value="C:membrane"/>
    <property type="evidence" value="ECO:0000266"/>
    <property type="project" value="RGD"/>
</dbReference>
<dbReference type="GO" id="GO:0008375">
    <property type="term" value="F:acetylglucosaminyltransferase activity"/>
    <property type="evidence" value="ECO:0000266"/>
    <property type="project" value="RGD"/>
</dbReference>
<dbReference type="GO" id="GO:0004563">
    <property type="term" value="F:beta-N-acetylhexosaminidase activity"/>
    <property type="evidence" value="ECO:0000250"/>
    <property type="project" value="UniProtKB"/>
</dbReference>
<dbReference type="GO" id="GO:0046982">
    <property type="term" value="F:protein heterodimerization activity"/>
    <property type="evidence" value="ECO:0000266"/>
    <property type="project" value="RGD"/>
</dbReference>
<dbReference type="GO" id="GO:0007628">
    <property type="term" value="P:adult walking behavior"/>
    <property type="evidence" value="ECO:0000266"/>
    <property type="project" value="RGD"/>
</dbReference>
<dbReference type="GO" id="GO:0005975">
    <property type="term" value="P:carbohydrate metabolic process"/>
    <property type="evidence" value="ECO:0007669"/>
    <property type="project" value="InterPro"/>
</dbReference>
<dbReference type="GO" id="GO:0048667">
    <property type="term" value="P:cell morphogenesis involved in neuron differentiation"/>
    <property type="evidence" value="ECO:0000266"/>
    <property type="project" value="RGD"/>
</dbReference>
<dbReference type="GO" id="GO:0030209">
    <property type="term" value="P:dermatan sulfate proteoglycan catabolic process"/>
    <property type="evidence" value="ECO:0000266"/>
    <property type="project" value="RGD"/>
</dbReference>
<dbReference type="GO" id="GO:0006689">
    <property type="term" value="P:ganglioside catabolic process"/>
    <property type="evidence" value="ECO:0000250"/>
    <property type="project" value="UniProtKB"/>
</dbReference>
<dbReference type="GO" id="GO:0006024">
    <property type="term" value="P:glycosaminoglycan biosynthetic process"/>
    <property type="evidence" value="ECO:0000266"/>
    <property type="project" value="RGD"/>
</dbReference>
<dbReference type="GO" id="GO:0030203">
    <property type="term" value="P:glycosaminoglycan metabolic process"/>
    <property type="evidence" value="ECO:0000266"/>
    <property type="project" value="RGD"/>
</dbReference>
<dbReference type="GO" id="GO:0030214">
    <property type="term" value="P:hyaluronan catabolic process"/>
    <property type="evidence" value="ECO:0000266"/>
    <property type="project" value="RGD"/>
</dbReference>
<dbReference type="GO" id="GO:0019915">
    <property type="term" value="P:lipid storage"/>
    <property type="evidence" value="ECO:0000266"/>
    <property type="project" value="RGD"/>
</dbReference>
<dbReference type="GO" id="GO:0007626">
    <property type="term" value="P:locomotory behavior"/>
    <property type="evidence" value="ECO:0000266"/>
    <property type="project" value="RGD"/>
</dbReference>
<dbReference type="GO" id="GO:0007040">
    <property type="term" value="P:lysosome organization"/>
    <property type="evidence" value="ECO:0000266"/>
    <property type="project" value="RGD"/>
</dbReference>
<dbReference type="GO" id="GO:0051651">
    <property type="term" value="P:maintenance of location in cell"/>
    <property type="evidence" value="ECO:0000266"/>
    <property type="project" value="RGD"/>
</dbReference>
<dbReference type="GO" id="GO:0042552">
    <property type="term" value="P:myelination"/>
    <property type="evidence" value="ECO:0000266"/>
    <property type="project" value="RGD"/>
</dbReference>
<dbReference type="GO" id="GO:0006491">
    <property type="term" value="P:N-glycan processing"/>
    <property type="evidence" value="ECO:0000318"/>
    <property type="project" value="GO_Central"/>
</dbReference>
<dbReference type="GO" id="GO:0050885">
    <property type="term" value="P:neuromuscular process controlling balance"/>
    <property type="evidence" value="ECO:0000266"/>
    <property type="project" value="RGD"/>
</dbReference>
<dbReference type="GO" id="GO:0050884">
    <property type="term" value="P:neuromuscular process controlling posture"/>
    <property type="evidence" value="ECO:0000266"/>
    <property type="project" value="RGD"/>
</dbReference>
<dbReference type="GO" id="GO:0007605">
    <property type="term" value="P:sensory perception of sound"/>
    <property type="evidence" value="ECO:0000266"/>
    <property type="project" value="RGD"/>
</dbReference>
<dbReference type="GO" id="GO:0019953">
    <property type="term" value="P:sexual reproduction"/>
    <property type="evidence" value="ECO:0000266"/>
    <property type="project" value="RGD"/>
</dbReference>
<dbReference type="GO" id="GO:0001501">
    <property type="term" value="P:skeletal system development"/>
    <property type="evidence" value="ECO:0000266"/>
    <property type="project" value="RGD"/>
</dbReference>
<dbReference type="CDD" id="cd06562">
    <property type="entry name" value="GH20_HexA_HexB-like"/>
    <property type="match status" value="1"/>
</dbReference>
<dbReference type="FunFam" id="3.20.20.80:FF:000049">
    <property type="entry name" value="Beta-hexosaminidase A"/>
    <property type="match status" value="1"/>
</dbReference>
<dbReference type="FunFam" id="3.30.379.10:FF:000001">
    <property type="entry name" value="Beta-hexosaminidase subunit beta"/>
    <property type="match status" value="1"/>
</dbReference>
<dbReference type="Gene3D" id="3.30.379.10">
    <property type="entry name" value="Chitobiase/beta-hexosaminidase domain 2-like"/>
    <property type="match status" value="1"/>
</dbReference>
<dbReference type="Gene3D" id="3.20.20.80">
    <property type="entry name" value="Glycosidases"/>
    <property type="match status" value="1"/>
</dbReference>
<dbReference type="InterPro" id="IPR025705">
    <property type="entry name" value="Beta_hexosaminidase_sua/sub"/>
</dbReference>
<dbReference type="InterPro" id="IPR015883">
    <property type="entry name" value="Glyco_hydro_20_cat"/>
</dbReference>
<dbReference type="InterPro" id="IPR017853">
    <property type="entry name" value="Glycoside_hydrolase_SF"/>
</dbReference>
<dbReference type="InterPro" id="IPR029018">
    <property type="entry name" value="Hex-like_dom2"/>
</dbReference>
<dbReference type="InterPro" id="IPR029019">
    <property type="entry name" value="HEX_eukaryotic_N"/>
</dbReference>
<dbReference type="PANTHER" id="PTHR22600">
    <property type="entry name" value="BETA-HEXOSAMINIDASE"/>
    <property type="match status" value="1"/>
</dbReference>
<dbReference type="PANTHER" id="PTHR22600:SF39">
    <property type="entry name" value="BETA-HEXOSAMINIDASE SUBUNIT ALPHA"/>
    <property type="match status" value="1"/>
</dbReference>
<dbReference type="Pfam" id="PF00728">
    <property type="entry name" value="Glyco_hydro_20"/>
    <property type="match status" value="1"/>
</dbReference>
<dbReference type="Pfam" id="PF14845">
    <property type="entry name" value="Glycohydro_20b2"/>
    <property type="match status" value="1"/>
</dbReference>
<dbReference type="PIRSF" id="PIRSF001093">
    <property type="entry name" value="B-hxosamndse_ab_euk"/>
    <property type="match status" value="1"/>
</dbReference>
<dbReference type="PRINTS" id="PR00738">
    <property type="entry name" value="GLHYDRLASE20"/>
</dbReference>
<dbReference type="SUPFAM" id="SSF51445">
    <property type="entry name" value="(Trans)glycosidases"/>
    <property type="match status" value="1"/>
</dbReference>
<dbReference type="SUPFAM" id="SSF55545">
    <property type="entry name" value="beta-N-acetylhexosaminidase-like domain"/>
    <property type="match status" value="1"/>
</dbReference>
<comment type="function">
    <text evidence="2">Hydrolyzes the non-reducing end N-acetyl-D-hexosamine and/or sulfated N-acetyl-D-hexosamine of glycoconjugates, such as the oligosaccharide moieties from proteins and neutral glycolipids, or from certain mucopolysaccharides. The isozyme S is as active as the isozyme A on the anionic bis-sulfated glycans, the chondroitin-6-sulfate trisaccharide (C6S-3), and the dermatan sulfate pentasaccharide, and the sulfated glycosphingolipid SM2. The isozyme B does not hydrolyze each of these substrates, however hydrolyzes efficiently neutral oligosaccharide. Only the isozyme A is responsible for the degradation of GM2 gangliosides in the presence of GM2A.</text>
</comment>
<comment type="catalytic activity">
    <reaction evidence="2">
        <text>Hydrolysis of terminal non-reducing N-acetyl-D-hexosamine residues in N-acetyl-beta-D-hexosaminides.</text>
        <dbReference type="EC" id="3.2.1.52"/>
    </reaction>
</comment>
<comment type="catalytic activity">
    <reaction evidence="2">
        <text>N-acetyl-beta-D-galactosaminyl-(1-&gt;4)-beta-D-3-sulfogalactosyl-(1-&gt;4)-beta-D-glucosyl-(1&lt;-&gt;1')-ceramide + H2O = a beta-D-3-sulfogalactosyl-(1-&gt;4)-beta-D-glucosyl-(1&lt;-&gt;1')-ceramide + N-acetyl-beta-D-galactosamine</text>
        <dbReference type="Rhea" id="RHEA:48276"/>
        <dbReference type="ChEBI" id="CHEBI:15377"/>
        <dbReference type="ChEBI" id="CHEBI:28497"/>
        <dbReference type="ChEBI" id="CHEBI:90163"/>
        <dbReference type="ChEBI" id="CHEBI:90164"/>
    </reaction>
    <physiologicalReaction direction="left-to-right" evidence="2">
        <dbReference type="Rhea" id="RHEA:48277"/>
    </physiologicalReaction>
</comment>
<comment type="catalytic activity">
    <reaction evidence="2">
        <text>a ganglioside GM2 (d18:1(4E)) + H2O = a ganglioside GM3 (d18:1(4E)) + N-acetyl-beta-D-galactosamine</text>
        <dbReference type="Rhea" id="RHEA:47940"/>
        <dbReference type="ChEBI" id="CHEBI:15377"/>
        <dbReference type="ChEBI" id="CHEBI:28497"/>
        <dbReference type="ChEBI" id="CHEBI:60065"/>
        <dbReference type="ChEBI" id="CHEBI:71502"/>
    </reaction>
    <physiologicalReaction direction="left-to-right" evidence="2">
        <dbReference type="Rhea" id="RHEA:47941"/>
    </physiologicalReaction>
</comment>
<comment type="catalytic activity">
    <reaction evidence="2">
        <text>a ganglioside GM2 + H2O = a ganglioside GM3 + N-acetyl-beta-D-galactosamine</text>
        <dbReference type="Rhea" id="RHEA:47968"/>
        <dbReference type="ChEBI" id="CHEBI:15377"/>
        <dbReference type="ChEBI" id="CHEBI:28497"/>
        <dbReference type="ChEBI" id="CHEBI:79210"/>
        <dbReference type="ChEBI" id="CHEBI:79218"/>
    </reaction>
    <physiologicalReaction direction="left-to-right" evidence="2">
        <dbReference type="Rhea" id="RHEA:47969"/>
    </physiologicalReaction>
</comment>
<comment type="catalytic activity">
    <reaction evidence="2">
        <text>beta-D-GalNAc-(1-&gt;4)-alpha-L-IdoA-(1-&gt;3)-beta-D-GalNAc-4-sulfate-(1-&gt;4)-alpha-L-IdoA-(1-&gt;3)-D-GalNAc-4-sulfate + H2O = alpha-L-IdoA-(1-&gt;3)-beta-D-GalNAc-4-sulfate-(1-&gt;4)-alpha-L-IdoA-(1-&gt;3)-D-GalNAc-4-sulfate + N-acetyl-D-galactosamine</text>
        <dbReference type="Rhea" id="RHEA:64372"/>
        <dbReference type="ChEBI" id="CHEBI:15377"/>
        <dbReference type="ChEBI" id="CHEBI:28037"/>
        <dbReference type="ChEBI" id="CHEBI:152565"/>
        <dbReference type="ChEBI" id="CHEBI:152566"/>
    </reaction>
    <physiologicalReaction direction="left-to-right" evidence="2">
        <dbReference type="Rhea" id="RHEA:64373"/>
    </physiologicalReaction>
</comment>
<comment type="catalytic activity">
    <reaction evidence="2">
        <text>N-acetyl-beta-D-6-sulfogalactosaminyl-(1-&gt;4)-alpha-L-iduronyl-(1-&gt;3)-N-acetyl-D-6-sulfogalactosamine + H2O = alpha-L-iduronyl-(1-&gt;3)-N-acetyl-D-6-sulfogalactosamine + N-acetyl-D-6-sulfogalactosamine</text>
        <dbReference type="Rhea" id="RHEA:64384"/>
        <dbReference type="ChEBI" id="CHEBI:15377"/>
        <dbReference type="ChEBI" id="CHEBI:152567"/>
        <dbReference type="ChEBI" id="CHEBI:152568"/>
        <dbReference type="ChEBI" id="CHEBI:153064"/>
    </reaction>
    <physiologicalReaction direction="left-to-right" evidence="2">
        <dbReference type="Rhea" id="RHEA:64385"/>
    </physiologicalReaction>
</comment>
<comment type="activity regulation">
    <text evidence="2">Addition of GM2A stimulates the hydrolysis of sulfated glycosphingolipid SM2 and the ganglioside GM2.</text>
</comment>
<comment type="subunit">
    <text evidence="2">There are 3 beta-hexosaminidase isozymes: isozyme A (hexosaminidase A) is a heterodimer composed of one subunit alpha and one subunit beta (chain A and B); isozyme B (hexosaminidase B) is a homodimer of two beta subunits (two chains A and B); isozyme S (hexosaminidase S) is a homodimer of two alpha subunits. The composition of the dimer (isozyme A versus isozyme S) has a significant effect on the substrate specificity of the alpha subunit active site.</text>
</comment>
<comment type="subcellular location">
    <subcellularLocation>
        <location evidence="1">Lysosome</location>
    </subcellularLocation>
</comment>
<comment type="similarity">
    <text evidence="4">Belongs to the glycosyl hydrolase 20 family.</text>
</comment>
<feature type="signal peptide" evidence="3">
    <location>
        <begin position="1"/>
        <end position="22"/>
    </location>
</feature>
<feature type="propeptide" id="PRO_0000011999" evidence="1">
    <location>
        <begin position="23"/>
        <end position="88"/>
    </location>
</feature>
<feature type="chain" id="PRO_0000012000" description="Beta-hexosaminidase subunit alpha">
    <location>
        <begin position="89"/>
        <end position="528"/>
    </location>
</feature>
<feature type="region of interest" description="Critical for hydrolysis GM2 gangliosides" evidence="1">
    <location>
        <begin position="422"/>
        <end position="423"/>
    </location>
</feature>
<feature type="active site" description="Proton donor" evidence="1">
    <location>
        <position position="323"/>
    </location>
</feature>
<feature type="glycosylation site" description="N-linked (GlcNAc...) asparagine" evidence="3">
    <location>
        <position position="115"/>
    </location>
</feature>
<feature type="glycosylation site" description="N-linked (GlcNAc...) asparagine" evidence="3">
    <location>
        <position position="157"/>
    </location>
</feature>
<feature type="glycosylation site" description="N-linked (GlcNAc...) asparagine" evidence="3">
    <location>
        <position position="295"/>
    </location>
</feature>
<feature type="glycosylation site" description="N-linked (GlcNAc...) asparagine" evidence="3">
    <location>
        <position position="487"/>
    </location>
</feature>
<feature type="disulfide bond" evidence="1">
    <location>
        <begin position="58"/>
        <end position="104"/>
    </location>
</feature>
<feature type="disulfide bond" evidence="1">
    <location>
        <begin position="277"/>
        <end position="328"/>
    </location>
</feature>
<feature type="disulfide bond" evidence="1">
    <location>
        <begin position="504"/>
        <end position="521"/>
    </location>
</feature>
<proteinExistence type="evidence at transcript level"/>
<organism>
    <name type="scientific">Rattus norvegicus</name>
    <name type="common">Rat</name>
    <dbReference type="NCBI Taxonomy" id="10116"/>
    <lineage>
        <taxon>Eukaryota</taxon>
        <taxon>Metazoa</taxon>
        <taxon>Chordata</taxon>
        <taxon>Craniata</taxon>
        <taxon>Vertebrata</taxon>
        <taxon>Euteleostomi</taxon>
        <taxon>Mammalia</taxon>
        <taxon>Eutheria</taxon>
        <taxon>Euarchontoglires</taxon>
        <taxon>Glires</taxon>
        <taxon>Rodentia</taxon>
        <taxon>Myomorpha</taxon>
        <taxon>Muroidea</taxon>
        <taxon>Muridae</taxon>
        <taxon>Murinae</taxon>
        <taxon>Rattus</taxon>
    </lineage>
</organism>
<evidence type="ECO:0000250" key="1"/>
<evidence type="ECO:0000250" key="2">
    <source>
        <dbReference type="UniProtKB" id="P06865"/>
    </source>
</evidence>
<evidence type="ECO:0000255" key="3"/>
<evidence type="ECO:0000305" key="4"/>
<evidence type="ECO:0000312" key="5">
    <source>
        <dbReference type="RGD" id="2792"/>
    </source>
</evidence>
<accession>Q641X3</accession>
<name>HEXA_RAT</name>
<protein>
    <recommendedName>
        <fullName evidence="4">Beta-hexosaminidase subunit alpha</fullName>
        <ecNumber evidence="2">3.2.1.52</ecNumber>
    </recommendedName>
    <alternativeName>
        <fullName>Beta-N-acetylhexosaminidase subunit alpha</fullName>
        <shortName>Hexosaminidase subunit A</shortName>
    </alternativeName>
    <alternativeName>
        <fullName>N-acetyl-beta-glucosaminidase subunit alpha</fullName>
    </alternativeName>
</protein>
<reference key="1">
    <citation type="journal article" date="2004" name="Genome Res.">
        <title>The status, quality, and expansion of the NIH full-length cDNA project: the Mammalian Gene Collection (MGC).</title>
        <authorList>
            <consortium name="The MGC Project Team"/>
        </authorList>
    </citation>
    <scope>NUCLEOTIDE SEQUENCE [LARGE SCALE MRNA]</scope>
    <source>
        <tissue>Testis</tissue>
    </source>
</reference>